<reference key="1">
    <citation type="journal article" date="2008" name="PLoS ONE">
        <title>Comparative analysis of Acinetobacters: three genomes for three lifestyles.</title>
        <authorList>
            <person name="Vallenet D."/>
            <person name="Nordmann P."/>
            <person name="Barbe V."/>
            <person name="Poirel L."/>
            <person name="Mangenot S."/>
            <person name="Bataille E."/>
            <person name="Dossat C."/>
            <person name="Gas S."/>
            <person name="Kreimeyer A."/>
            <person name="Lenoble P."/>
            <person name="Oztas S."/>
            <person name="Poulain J."/>
            <person name="Segurens B."/>
            <person name="Robert C."/>
            <person name="Abergel C."/>
            <person name="Claverie J.-M."/>
            <person name="Raoult D."/>
            <person name="Medigue C."/>
            <person name="Weissenbach J."/>
            <person name="Cruveiller S."/>
        </authorList>
    </citation>
    <scope>NUCLEOTIDE SEQUENCE [LARGE SCALE GENOMIC DNA]</scope>
    <source>
        <strain>AYE</strain>
    </source>
</reference>
<protein>
    <recommendedName>
        <fullName evidence="1">Type III pantothenate kinase</fullName>
        <ecNumber evidence="1">2.7.1.33</ecNumber>
    </recommendedName>
    <alternativeName>
        <fullName evidence="1">PanK-III</fullName>
    </alternativeName>
    <alternativeName>
        <fullName evidence="1">Pantothenic acid kinase</fullName>
    </alternativeName>
</protein>
<accession>B0V8C7</accession>
<comment type="function">
    <text evidence="1">Catalyzes the phosphorylation of pantothenate (Pan), the first step in CoA biosynthesis.</text>
</comment>
<comment type="catalytic activity">
    <reaction evidence="1">
        <text>(R)-pantothenate + ATP = (R)-4'-phosphopantothenate + ADP + H(+)</text>
        <dbReference type="Rhea" id="RHEA:16373"/>
        <dbReference type="ChEBI" id="CHEBI:10986"/>
        <dbReference type="ChEBI" id="CHEBI:15378"/>
        <dbReference type="ChEBI" id="CHEBI:29032"/>
        <dbReference type="ChEBI" id="CHEBI:30616"/>
        <dbReference type="ChEBI" id="CHEBI:456216"/>
        <dbReference type="EC" id="2.7.1.33"/>
    </reaction>
</comment>
<comment type="cofactor">
    <cofactor evidence="1">
        <name>NH4(+)</name>
        <dbReference type="ChEBI" id="CHEBI:28938"/>
    </cofactor>
    <cofactor evidence="1">
        <name>K(+)</name>
        <dbReference type="ChEBI" id="CHEBI:29103"/>
    </cofactor>
    <text evidence="1">A monovalent cation. Ammonium or potassium.</text>
</comment>
<comment type="pathway">
    <text evidence="1">Cofactor biosynthesis; coenzyme A biosynthesis; CoA from (R)-pantothenate: step 1/5.</text>
</comment>
<comment type="subunit">
    <text evidence="1">Homodimer.</text>
</comment>
<comment type="subcellular location">
    <subcellularLocation>
        <location evidence="1">Cytoplasm</location>
    </subcellularLocation>
</comment>
<comment type="similarity">
    <text evidence="1">Belongs to the type III pantothenate kinase family.</text>
</comment>
<name>COAX_ACIBY</name>
<proteinExistence type="inferred from homology"/>
<feature type="chain" id="PRO_1000140214" description="Type III pantothenate kinase">
    <location>
        <begin position="1"/>
        <end position="244"/>
    </location>
</feature>
<feature type="active site" description="Proton acceptor" evidence="1">
    <location>
        <position position="104"/>
    </location>
</feature>
<feature type="binding site" evidence="1">
    <location>
        <begin position="7"/>
        <end position="14"/>
    </location>
    <ligand>
        <name>ATP</name>
        <dbReference type="ChEBI" id="CHEBI:30616"/>
    </ligand>
</feature>
<feature type="binding site" evidence="1">
    <location>
        <position position="95"/>
    </location>
    <ligand>
        <name>substrate</name>
    </ligand>
</feature>
<feature type="binding site" evidence="1">
    <location>
        <begin position="102"/>
        <end position="105"/>
    </location>
    <ligand>
        <name>substrate</name>
    </ligand>
</feature>
<feature type="binding site" evidence="1">
    <location>
        <position position="126"/>
    </location>
    <ligand>
        <name>ATP</name>
        <dbReference type="ChEBI" id="CHEBI:30616"/>
    </ligand>
</feature>
<feature type="binding site" evidence="1">
    <location>
        <position position="177"/>
    </location>
    <ligand>
        <name>substrate</name>
    </ligand>
</feature>
<sequence>MKSLWLDIGNTRLKYWITENQQIIEHAAELHLQSPADLLLGLIQHFKHQGLHRIGISSVLDTENNQRIQQILKWLEIPVVFAKVHAEYAGLQCGYEVPSQLGIDRWLQVLAVAEEKENYCIIGCGTALTIDLTKGKQHLGGYILPNLYLQRDALIQNTKGIKIPDSAFDNLNPGNNTVDAVHHGILLGLISTIESIMQQSPKKLLLTGGDAPLFAKFLQKYQPTVETDLLLKGLQQYIAHYPKD</sequence>
<dbReference type="EC" id="2.7.1.33" evidence="1"/>
<dbReference type="EMBL" id="CU459141">
    <property type="protein sequence ID" value="CAM87836.1"/>
    <property type="molecule type" value="Genomic_DNA"/>
</dbReference>
<dbReference type="RefSeq" id="WP_000839416.1">
    <property type="nucleotide sequence ID" value="NZ_JBDGFB010000027.1"/>
</dbReference>
<dbReference type="SMR" id="B0V8C7"/>
<dbReference type="EnsemblBacteria" id="CAM87836">
    <property type="protein sequence ID" value="CAM87836"/>
    <property type="gene ID" value="ABAYE3016"/>
</dbReference>
<dbReference type="KEGG" id="aby:ABAYE3016"/>
<dbReference type="HOGENOM" id="CLU_066627_0_1_6"/>
<dbReference type="UniPathway" id="UPA00241">
    <property type="reaction ID" value="UER00352"/>
</dbReference>
<dbReference type="GO" id="GO:0005737">
    <property type="term" value="C:cytoplasm"/>
    <property type="evidence" value="ECO:0007669"/>
    <property type="project" value="UniProtKB-SubCell"/>
</dbReference>
<dbReference type="GO" id="GO:0005524">
    <property type="term" value="F:ATP binding"/>
    <property type="evidence" value="ECO:0007669"/>
    <property type="project" value="UniProtKB-UniRule"/>
</dbReference>
<dbReference type="GO" id="GO:0004594">
    <property type="term" value="F:pantothenate kinase activity"/>
    <property type="evidence" value="ECO:0007669"/>
    <property type="project" value="UniProtKB-UniRule"/>
</dbReference>
<dbReference type="GO" id="GO:0015937">
    <property type="term" value="P:coenzyme A biosynthetic process"/>
    <property type="evidence" value="ECO:0007669"/>
    <property type="project" value="UniProtKB-UniRule"/>
</dbReference>
<dbReference type="CDD" id="cd24015">
    <property type="entry name" value="ASKHA_NBD_PanK-III"/>
    <property type="match status" value="1"/>
</dbReference>
<dbReference type="Gene3D" id="3.30.420.40">
    <property type="match status" value="2"/>
</dbReference>
<dbReference type="HAMAP" id="MF_01274">
    <property type="entry name" value="Pantothen_kinase_3"/>
    <property type="match status" value="1"/>
</dbReference>
<dbReference type="InterPro" id="IPR043129">
    <property type="entry name" value="ATPase_NBD"/>
</dbReference>
<dbReference type="InterPro" id="IPR004619">
    <property type="entry name" value="Type_III_PanK"/>
</dbReference>
<dbReference type="NCBIfam" id="TIGR00671">
    <property type="entry name" value="baf"/>
    <property type="match status" value="1"/>
</dbReference>
<dbReference type="NCBIfam" id="NF009856">
    <property type="entry name" value="PRK13322.1-1"/>
    <property type="match status" value="1"/>
</dbReference>
<dbReference type="PANTHER" id="PTHR34265">
    <property type="entry name" value="TYPE III PANTOTHENATE KINASE"/>
    <property type="match status" value="1"/>
</dbReference>
<dbReference type="PANTHER" id="PTHR34265:SF1">
    <property type="entry name" value="TYPE III PANTOTHENATE KINASE"/>
    <property type="match status" value="1"/>
</dbReference>
<dbReference type="Pfam" id="PF03309">
    <property type="entry name" value="Pan_kinase"/>
    <property type="match status" value="1"/>
</dbReference>
<dbReference type="SUPFAM" id="SSF53067">
    <property type="entry name" value="Actin-like ATPase domain"/>
    <property type="match status" value="2"/>
</dbReference>
<gene>
    <name evidence="1" type="primary">coaX</name>
    <name type="ordered locus">ABAYE3016</name>
</gene>
<evidence type="ECO:0000255" key="1">
    <source>
        <dbReference type="HAMAP-Rule" id="MF_01274"/>
    </source>
</evidence>
<organism>
    <name type="scientific">Acinetobacter baumannii (strain AYE)</name>
    <dbReference type="NCBI Taxonomy" id="509173"/>
    <lineage>
        <taxon>Bacteria</taxon>
        <taxon>Pseudomonadati</taxon>
        <taxon>Pseudomonadota</taxon>
        <taxon>Gammaproteobacteria</taxon>
        <taxon>Moraxellales</taxon>
        <taxon>Moraxellaceae</taxon>
        <taxon>Acinetobacter</taxon>
        <taxon>Acinetobacter calcoaceticus/baumannii complex</taxon>
    </lineage>
</organism>
<keyword id="KW-0067">ATP-binding</keyword>
<keyword id="KW-0173">Coenzyme A biosynthesis</keyword>
<keyword id="KW-0963">Cytoplasm</keyword>
<keyword id="KW-0418">Kinase</keyword>
<keyword id="KW-0547">Nucleotide-binding</keyword>
<keyword id="KW-0630">Potassium</keyword>
<keyword id="KW-0808">Transferase</keyword>